<keyword id="KW-0028">Amino-acid biosynthesis</keyword>
<keyword id="KW-0057">Aromatic amino acid biosynthesis</keyword>
<keyword id="KW-0328">Glycosyltransferase</keyword>
<keyword id="KW-0460">Magnesium</keyword>
<keyword id="KW-0479">Metal-binding</keyword>
<keyword id="KW-1185">Reference proteome</keyword>
<keyword id="KW-0808">Transferase</keyword>
<keyword id="KW-0822">Tryptophan biosynthesis</keyword>
<proteinExistence type="inferred from homology"/>
<organism>
    <name type="scientific">Pseudomonas syringae pv. tomato (strain ATCC BAA-871 / DC3000)</name>
    <dbReference type="NCBI Taxonomy" id="223283"/>
    <lineage>
        <taxon>Bacteria</taxon>
        <taxon>Pseudomonadati</taxon>
        <taxon>Pseudomonadota</taxon>
        <taxon>Gammaproteobacteria</taxon>
        <taxon>Pseudomonadales</taxon>
        <taxon>Pseudomonadaceae</taxon>
        <taxon>Pseudomonas</taxon>
    </lineage>
</organism>
<name>TRPD_PSESM</name>
<feature type="chain" id="PRO_0000154471" description="Anthranilate phosphoribosyltransferase">
    <location>
        <begin position="1"/>
        <end position="349"/>
    </location>
</feature>
<feature type="binding site" evidence="1">
    <location>
        <position position="82"/>
    </location>
    <ligand>
        <name>5-phospho-alpha-D-ribose 1-diphosphate</name>
        <dbReference type="ChEBI" id="CHEBI:58017"/>
    </ligand>
</feature>
<feature type="binding site" evidence="1">
    <location>
        <position position="82"/>
    </location>
    <ligand>
        <name>anthranilate</name>
        <dbReference type="ChEBI" id="CHEBI:16567"/>
        <label>1</label>
    </ligand>
</feature>
<feature type="binding site" evidence="1">
    <location>
        <begin position="85"/>
        <end position="86"/>
    </location>
    <ligand>
        <name>5-phospho-alpha-D-ribose 1-diphosphate</name>
        <dbReference type="ChEBI" id="CHEBI:58017"/>
    </ligand>
</feature>
<feature type="binding site" evidence="1">
    <location>
        <begin position="92"/>
        <end position="95"/>
    </location>
    <ligand>
        <name>5-phospho-alpha-D-ribose 1-diphosphate</name>
        <dbReference type="ChEBI" id="CHEBI:58017"/>
    </ligand>
</feature>
<feature type="binding site" evidence="1">
    <location>
        <position position="94"/>
    </location>
    <ligand>
        <name>Mg(2+)</name>
        <dbReference type="ChEBI" id="CHEBI:18420"/>
        <label>1</label>
    </ligand>
</feature>
<feature type="binding site" evidence="1">
    <location>
        <begin position="110"/>
        <end position="118"/>
    </location>
    <ligand>
        <name>5-phospho-alpha-D-ribose 1-diphosphate</name>
        <dbReference type="ChEBI" id="CHEBI:58017"/>
    </ligand>
</feature>
<feature type="binding site" evidence="1">
    <location>
        <position position="113"/>
    </location>
    <ligand>
        <name>anthranilate</name>
        <dbReference type="ChEBI" id="CHEBI:16567"/>
        <label>1</label>
    </ligand>
</feature>
<feature type="binding site" evidence="1">
    <location>
        <position position="122"/>
    </location>
    <ligand>
        <name>5-phospho-alpha-D-ribose 1-diphosphate</name>
        <dbReference type="ChEBI" id="CHEBI:58017"/>
    </ligand>
</feature>
<feature type="binding site" evidence="1">
    <location>
        <position position="168"/>
    </location>
    <ligand>
        <name>anthranilate</name>
        <dbReference type="ChEBI" id="CHEBI:16567"/>
        <label>2</label>
    </ligand>
</feature>
<feature type="binding site" evidence="1">
    <location>
        <position position="227"/>
    </location>
    <ligand>
        <name>Mg(2+)</name>
        <dbReference type="ChEBI" id="CHEBI:18420"/>
        <label>2</label>
    </ligand>
</feature>
<feature type="binding site" evidence="1">
    <location>
        <position position="228"/>
    </location>
    <ligand>
        <name>Mg(2+)</name>
        <dbReference type="ChEBI" id="CHEBI:18420"/>
        <label>1</label>
    </ligand>
</feature>
<feature type="binding site" evidence="1">
    <location>
        <position position="228"/>
    </location>
    <ligand>
        <name>Mg(2+)</name>
        <dbReference type="ChEBI" id="CHEBI:18420"/>
        <label>2</label>
    </ligand>
</feature>
<protein>
    <recommendedName>
        <fullName evidence="1">Anthranilate phosphoribosyltransferase</fullName>
        <ecNumber evidence="1">2.4.2.18</ecNumber>
    </recommendedName>
</protein>
<comment type="function">
    <text evidence="1">Catalyzes the transfer of the phosphoribosyl group of 5-phosphorylribose-1-pyrophosphate (PRPP) to anthranilate to yield N-(5'-phosphoribosyl)-anthranilate (PRA).</text>
</comment>
<comment type="catalytic activity">
    <reaction evidence="1">
        <text>N-(5-phospho-beta-D-ribosyl)anthranilate + diphosphate = 5-phospho-alpha-D-ribose 1-diphosphate + anthranilate</text>
        <dbReference type="Rhea" id="RHEA:11768"/>
        <dbReference type="ChEBI" id="CHEBI:16567"/>
        <dbReference type="ChEBI" id="CHEBI:18277"/>
        <dbReference type="ChEBI" id="CHEBI:33019"/>
        <dbReference type="ChEBI" id="CHEBI:58017"/>
        <dbReference type="EC" id="2.4.2.18"/>
    </reaction>
</comment>
<comment type="cofactor">
    <cofactor evidence="1">
        <name>Mg(2+)</name>
        <dbReference type="ChEBI" id="CHEBI:18420"/>
    </cofactor>
    <text evidence="1">Binds 2 magnesium ions per monomer.</text>
</comment>
<comment type="pathway">
    <text evidence="1">Amino-acid biosynthesis; L-tryptophan biosynthesis; L-tryptophan from chorismate: step 2/5.</text>
</comment>
<comment type="subunit">
    <text evidence="1">Homodimer.</text>
</comment>
<comment type="similarity">
    <text evidence="1">Belongs to the anthranilate phosphoribosyltransferase family.</text>
</comment>
<sequence>MNIKSALNRVVNQLDLSTDEMRDVMREIMTGQCTEAQIGAFLMGMRMKSETIDEIVGAVSVMRELADKVELKTLDGVVDIVGTGGDGANIFNVSTASAFVISAAGCTVAKHGNRAVSGKSGSADLLEAAGVYLNLTPVQVARCIDSVGIGFMFAQSHHSAMKHTAGPRRELGLRTLFNMLGPLTNPAGVRHQVVGVFNQALCRPLAEVLLRLGSKHVLVVHSQDGLDEFSLAAPTFVAELKNGEVTEYWVQPEDLGIKSQSLYGLAVESPAQSLELIRDALGRRKTEIGQKAAEMIVLNAGAALYAADHATSLKEGVALAHDALHTGLAREKLDELGAFTAVFKQENEA</sequence>
<accession>Q88A04</accession>
<reference key="1">
    <citation type="journal article" date="2003" name="Proc. Natl. Acad. Sci. U.S.A.">
        <title>The complete genome sequence of the Arabidopsis and tomato pathogen Pseudomonas syringae pv. tomato DC3000.</title>
        <authorList>
            <person name="Buell C.R."/>
            <person name="Joardar V."/>
            <person name="Lindeberg M."/>
            <person name="Selengut J."/>
            <person name="Paulsen I.T."/>
            <person name="Gwinn M.L."/>
            <person name="Dodson R.J."/>
            <person name="DeBoy R.T."/>
            <person name="Durkin A.S."/>
            <person name="Kolonay J.F."/>
            <person name="Madupu R."/>
            <person name="Daugherty S.C."/>
            <person name="Brinkac L.M."/>
            <person name="Beanan M.J."/>
            <person name="Haft D.H."/>
            <person name="Nelson W.C."/>
            <person name="Davidsen T.M."/>
            <person name="Zafar N."/>
            <person name="Zhou L."/>
            <person name="Liu J."/>
            <person name="Yuan Q."/>
            <person name="Khouri H.M."/>
            <person name="Fedorova N.B."/>
            <person name="Tran B."/>
            <person name="Russell D."/>
            <person name="Berry K.J."/>
            <person name="Utterback T.R."/>
            <person name="Van Aken S.E."/>
            <person name="Feldblyum T.V."/>
            <person name="D'Ascenzo M."/>
            <person name="Deng W.-L."/>
            <person name="Ramos A.R."/>
            <person name="Alfano J.R."/>
            <person name="Cartinhour S."/>
            <person name="Chatterjee A.K."/>
            <person name="Delaney T.P."/>
            <person name="Lazarowitz S.G."/>
            <person name="Martin G.B."/>
            <person name="Schneider D.J."/>
            <person name="Tang X."/>
            <person name="Bender C.L."/>
            <person name="White O."/>
            <person name="Fraser C.M."/>
            <person name="Collmer A."/>
        </authorList>
    </citation>
    <scope>NUCLEOTIDE SEQUENCE [LARGE SCALE GENOMIC DNA]</scope>
    <source>
        <strain>ATCC BAA-871 / DC3000</strain>
    </source>
</reference>
<evidence type="ECO:0000255" key="1">
    <source>
        <dbReference type="HAMAP-Rule" id="MF_00211"/>
    </source>
</evidence>
<gene>
    <name evidence="1" type="primary">trpD</name>
    <name type="ordered locus">PSPTO_0593</name>
</gene>
<dbReference type="EC" id="2.4.2.18" evidence="1"/>
<dbReference type="EMBL" id="AE016853">
    <property type="protein sequence ID" value="AAO54135.1"/>
    <property type="molecule type" value="Genomic_DNA"/>
</dbReference>
<dbReference type="RefSeq" id="NP_790440.1">
    <property type="nucleotide sequence ID" value="NC_004578.1"/>
</dbReference>
<dbReference type="RefSeq" id="WP_011103215.1">
    <property type="nucleotide sequence ID" value="NC_004578.1"/>
</dbReference>
<dbReference type="SMR" id="Q88A04"/>
<dbReference type="STRING" id="223283.PSPTO_0593"/>
<dbReference type="GeneID" id="1182204"/>
<dbReference type="KEGG" id="pst:PSPTO_0593"/>
<dbReference type="PATRIC" id="fig|223283.9.peg.598"/>
<dbReference type="eggNOG" id="COG0547">
    <property type="taxonomic scope" value="Bacteria"/>
</dbReference>
<dbReference type="HOGENOM" id="CLU_034315_2_1_6"/>
<dbReference type="OrthoDB" id="9806430at2"/>
<dbReference type="PhylomeDB" id="Q88A04"/>
<dbReference type="UniPathway" id="UPA00035">
    <property type="reaction ID" value="UER00041"/>
</dbReference>
<dbReference type="Proteomes" id="UP000002515">
    <property type="component" value="Chromosome"/>
</dbReference>
<dbReference type="GO" id="GO:0005829">
    <property type="term" value="C:cytosol"/>
    <property type="evidence" value="ECO:0007669"/>
    <property type="project" value="TreeGrafter"/>
</dbReference>
<dbReference type="GO" id="GO:0004048">
    <property type="term" value="F:anthranilate phosphoribosyltransferase activity"/>
    <property type="evidence" value="ECO:0007669"/>
    <property type="project" value="UniProtKB-UniRule"/>
</dbReference>
<dbReference type="GO" id="GO:0000287">
    <property type="term" value="F:magnesium ion binding"/>
    <property type="evidence" value="ECO:0007669"/>
    <property type="project" value="UniProtKB-UniRule"/>
</dbReference>
<dbReference type="GO" id="GO:0000162">
    <property type="term" value="P:L-tryptophan biosynthetic process"/>
    <property type="evidence" value="ECO:0007669"/>
    <property type="project" value="UniProtKB-UniRule"/>
</dbReference>
<dbReference type="FunFam" id="1.20.970.10:FF:000006">
    <property type="entry name" value="Anthranilate phosphoribosyltransferase"/>
    <property type="match status" value="1"/>
</dbReference>
<dbReference type="FunFam" id="3.40.1030.10:FF:000002">
    <property type="entry name" value="Anthranilate phosphoribosyltransferase"/>
    <property type="match status" value="1"/>
</dbReference>
<dbReference type="Gene3D" id="3.40.1030.10">
    <property type="entry name" value="Nucleoside phosphorylase/phosphoribosyltransferase catalytic domain"/>
    <property type="match status" value="1"/>
</dbReference>
<dbReference type="Gene3D" id="1.20.970.10">
    <property type="entry name" value="Transferase, Pyrimidine Nucleoside Phosphorylase, Chain C"/>
    <property type="match status" value="1"/>
</dbReference>
<dbReference type="HAMAP" id="MF_00211">
    <property type="entry name" value="TrpD"/>
    <property type="match status" value="1"/>
</dbReference>
<dbReference type="InterPro" id="IPR005940">
    <property type="entry name" value="Anthranilate_Pribosyl_Tfrase"/>
</dbReference>
<dbReference type="InterPro" id="IPR000312">
    <property type="entry name" value="Glycosyl_Trfase_fam3"/>
</dbReference>
<dbReference type="InterPro" id="IPR017459">
    <property type="entry name" value="Glycosyl_Trfase_fam3_N_dom"/>
</dbReference>
<dbReference type="InterPro" id="IPR036320">
    <property type="entry name" value="Glycosyl_Trfase_fam3_N_dom_sf"/>
</dbReference>
<dbReference type="InterPro" id="IPR035902">
    <property type="entry name" value="Nuc_phospho_transferase"/>
</dbReference>
<dbReference type="NCBIfam" id="TIGR01245">
    <property type="entry name" value="trpD"/>
    <property type="match status" value="1"/>
</dbReference>
<dbReference type="PANTHER" id="PTHR43285">
    <property type="entry name" value="ANTHRANILATE PHOSPHORIBOSYLTRANSFERASE"/>
    <property type="match status" value="1"/>
</dbReference>
<dbReference type="PANTHER" id="PTHR43285:SF2">
    <property type="entry name" value="ANTHRANILATE PHOSPHORIBOSYLTRANSFERASE"/>
    <property type="match status" value="1"/>
</dbReference>
<dbReference type="Pfam" id="PF02885">
    <property type="entry name" value="Glycos_trans_3N"/>
    <property type="match status" value="1"/>
</dbReference>
<dbReference type="Pfam" id="PF00591">
    <property type="entry name" value="Glycos_transf_3"/>
    <property type="match status" value="1"/>
</dbReference>
<dbReference type="SUPFAM" id="SSF52418">
    <property type="entry name" value="Nucleoside phosphorylase/phosphoribosyltransferase catalytic domain"/>
    <property type="match status" value="1"/>
</dbReference>
<dbReference type="SUPFAM" id="SSF47648">
    <property type="entry name" value="Nucleoside phosphorylase/phosphoribosyltransferase N-terminal domain"/>
    <property type="match status" value="1"/>
</dbReference>